<gene>
    <name evidence="1" type="primary">coq7</name>
    <name type="ordered locus">Reut_A2989</name>
</gene>
<proteinExistence type="inferred from homology"/>
<reference key="1">
    <citation type="journal article" date="2010" name="PLoS ONE">
        <title>The complete multipartite genome sequence of Cupriavidus necator JMP134, a versatile pollutant degrader.</title>
        <authorList>
            <person name="Lykidis A."/>
            <person name="Perez-Pantoja D."/>
            <person name="Ledger T."/>
            <person name="Mavromatis K."/>
            <person name="Anderson I.J."/>
            <person name="Ivanova N.N."/>
            <person name="Hooper S.D."/>
            <person name="Lapidus A."/>
            <person name="Lucas S."/>
            <person name="Gonzalez B."/>
            <person name="Kyrpides N.C."/>
        </authorList>
    </citation>
    <scope>NUCLEOTIDE SEQUENCE [LARGE SCALE GENOMIC DNA]</scope>
    <source>
        <strain>JMP134 / LMG 1197</strain>
    </source>
</reference>
<accession>Q46WY4</accession>
<protein>
    <recommendedName>
        <fullName evidence="1">3-demethoxyubiquinol 3-hydroxylase</fullName>
        <shortName evidence="1">DMQ hydroxylase</shortName>
        <ecNumber evidence="1">1.14.99.60</ecNumber>
    </recommendedName>
    <alternativeName>
        <fullName evidence="1">2-nonaprenyl-3-methyl-6-methoxy-1,4-benzoquinol hydroxylase</fullName>
    </alternativeName>
</protein>
<sequence length="207" mass="22721">MDTFIREFDMALRAIAGATRSGRANPADRLAPDDGQLEQAERRHVAGLMRVNHVGEVCAQALYQAQKLTARNDDVRTQMDTAAREEEDHLAWCAERLRELDSRPSLLNPLWYAGAFAIGFLAGRAGDKVSLGFVAETEHQVEQHLSGHLDQLPAADGRSRAILEQMRDDEIRHGDAARAAGGVPLPAPVRALMRGASRVMTTAAYRI</sequence>
<dbReference type="EC" id="1.14.99.60" evidence="1"/>
<dbReference type="EMBL" id="CP000090">
    <property type="protein sequence ID" value="AAZ62349.1"/>
    <property type="molecule type" value="Genomic_DNA"/>
</dbReference>
<dbReference type="SMR" id="Q46WY4"/>
<dbReference type="STRING" id="264198.Reut_A2989"/>
<dbReference type="KEGG" id="reu:Reut_A2989"/>
<dbReference type="eggNOG" id="COG2941">
    <property type="taxonomic scope" value="Bacteria"/>
</dbReference>
<dbReference type="HOGENOM" id="CLU_088601_0_0_4"/>
<dbReference type="OrthoDB" id="5192789at2"/>
<dbReference type="UniPathway" id="UPA00232"/>
<dbReference type="GO" id="GO:0005886">
    <property type="term" value="C:plasma membrane"/>
    <property type="evidence" value="ECO:0007669"/>
    <property type="project" value="UniProtKB-SubCell"/>
</dbReference>
<dbReference type="GO" id="GO:0008682">
    <property type="term" value="F:3-demethoxyubiquinol 3-hydroxylase activity"/>
    <property type="evidence" value="ECO:0007669"/>
    <property type="project" value="UniProtKB-EC"/>
</dbReference>
<dbReference type="GO" id="GO:0046872">
    <property type="term" value="F:metal ion binding"/>
    <property type="evidence" value="ECO:0007669"/>
    <property type="project" value="UniProtKB-KW"/>
</dbReference>
<dbReference type="GO" id="GO:0006744">
    <property type="term" value="P:ubiquinone biosynthetic process"/>
    <property type="evidence" value="ECO:0007669"/>
    <property type="project" value="UniProtKB-UniRule"/>
</dbReference>
<dbReference type="CDD" id="cd01042">
    <property type="entry name" value="DMQH"/>
    <property type="match status" value="1"/>
</dbReference>
<dbReference type="Gene3D" id="1.20.1260.10">
    <property type="match status" value="1"/>
</dbReference>
<dbReference type="HAMAP" id="MF_01658">
    <property type="entry name" value="COQ7"/>
    <property type="match status" value="1"/>
</dbReference>
<dbReference type="InterPro" id="IPR047809">
    <property type="entry name" value="COQ7_proteobact"/>
</dbReference>
<dbReference type="InterPro" id="IPR012347">
    <property type="entry name" value="Ferritin-like"/>
</dbReference>
<dbReference type="InterPro" id="IPR009078">
    <property type="entry name" value="Ferritin-like_SF"/>
</dbReference>
<dbReference type="InterPro" id="IPR011566">
    <property type="entry name" value="Ubq_synth_Coq7"/>
</dbReference>
<dbReference type="NCBIfam" id="NF033656">
    <property type="entry name" value="DMQ_monoox_COQ7"/>
    <property type="match status" value="1"/>
</dbReference>
<dbReference type="PANTHER" id="PTHR11237:SF4">
    <property type="entry name" value="5-DEMETHOXYUBIQUINONE HYDROXYLASE, MITOCHONDRIAL"/>
    <property type="match status" value="1"/>
</dbReference>
<dbReference type="PANTHER" id="PTHR11237">
    <property type="entry name" value="COENZYME Q10 BIOSYNTHESIS PROTEIN 7"/>
    <property type="match status" value="1"/>
</dbReference>
<dbReference type="Pfam" id="PF03232">
    <property type="entry name" value="COQ7"/>
    <property type="match status" value="1"/>
</dbReference>
<dbReference type="SUPFAM" id="SSF47240">
    <property type="entry name" value="Ferritin-like"/>
    <property type="match status" value="1"/>
</dbReference>
<feature type="chain" id="PRO_0000338726" description="3-demethoxyubiquinol 3-hydroxylase">
    <location>
        <begin position="1"/>
        <end position="207"/>
    </location>
</feature>
<feature type="binding site" evidence="1">
    <location>
        <position position="56"/>
    </location>
    <ligand>
        <name>Fe cation</name>
        <dbReference type="ChEBI" id="CHEBI:24875"/>
        <label>1</label>
    </ligand>
</feature>
<feature type="binding site" evidence="1">
    <location>
        <position position="86"/>
    </location>
    <ligand>
        <name>Fe cation</name>
        <dbReference type="ChEBI" id="CHEBI:24875"/>
        <label>1</label>
    </ligand>
</feature>
<feature type="binding site" evidence="1">
    <location>
        <position position="86"/>
    </location>
    <ligand>
        <name>Fe cation</name>
        <dbReference type="ChEBI" id="CHEBI:24875"/>
        <label>2</label>
    </ligand>
</feature>
<feature type="binding site" evidence="1">
    <location>
        <position position="89"/>
    </location>
    <ligand>
        <name>Fe cation</name>
        <dbReference type="ChEBI" id="CHEBI:24875"/>
        <label>1</label>
    </ligand>
</feature>
<feature type="binding site" evidence="1">
    <location>
        <position position="138"/>
    </location>
    <ligand>
        <name>Fe cation</name>
        <dbReference type="ChEBI" id="CHEBI:24875"/>
        <label>2</label>
    </ligand>
</feature>
<feature type="binding site" evidence="1">
    <location>
        <position position="170"/>
    </location>
    <ligand>
        <name>Fe cation</name>
        <dbReference type="ChEBI" id="CHEBI:24875"/>
        <label>1</label>
    </ligand>
</feature>
<feature type="binding site" evidence="1">
    <location>
        <position position="170"/>
    </location>
    <ligand>
        <name>Fe cation</name>
        <dbReference type="ChEBI" id="CHEBI:24875"/>
        <label>2</label>
    </ligand>
</feature>
<feature type="binding site" evidence="1">
    <location>
        <position position="173"/>
    </location>
    <ligand>
        <name>Fe cation</name>
        <dbReference type="ChEBI" id="CHEBI:24875"/>
        <label>2</label>
    </ligand>
</feature>
<comment type="function">
    <text evidence="1">Catalyzes the hydroxylation of 2-nonaprenyl-3-methyl-6-methoxy-1,4-benzoquinol during ubiquinone biosynthesis.</text>
</comment>
<comment type="catalytic activity">
    <reaction evidence="1">
        <text>a 5-methoxy-2-methyl-3-(all-trans-polyprenyl)benzene-1,4-diol + AH2 + O2 = a 3-demethylubiquinol + A + H2O</text>
        <dbReference type="Rhea" id="RHEA:50908"/>
        <dbReference type="Rhea" id="RHEA-COMP:10859"/>
        <dbReference type="Rhea" id="RHEA-COMP:10914"/>
        <dbReference type="ChEBI" id="CHEBI:13193"/>
        <dbReference type="ChEBI" id="CHEBI:15377"/>
        <dbReference type="ChEBI" id="CHEBI:15379"/>
        <dbReference type="ChEBI" id="CHEBI:17499"/>
        <dbReference type="ChEBI" id="CHEBI:84167"/>
        <dbReference type="ChEBI" id="CHEBI:84422"/>
        <dbReference type="EC" id="1.14.99.60"/>
    </reaction>
</comment>
<comment type="cofactor">
    <cofactor evidence="1">
        <name>Fe cation</name>
        <dbReference type="ChEBI" id="CHEBI:24875"/>
    </cofactor>
    <text evidence="1">Binds 2 iron ions per subunit.</text>
</comment>
<comment type="pathway">
    <text evidence="1">Cofactor biosynthesis; ubiquinone biosynthesis.</text>
</comment>
<comment type="subcellular location">
    <subcellularLocation>
        <location evidence="1">Cell membrane</location>
        <topology evidence="1">Peripheral membrane protein</topology>
    </subcellularLocation>
</comment>
<comment type="similarity">
    <text evidence="1">Belongs to the COQ7 family.</text>
</comment>
<name>COQ7_CUPPJ</name>
<organism>
    <name type="scientific">Cupriavidus pinatubonensis (strain JMP 134 / LMG 1197)</name>
    <name type="common">Cupriavidus necator (strain JMP 134)</name>
    <dbReference type="NCBI Taxonomy" id="264198"/>
    <lineage>
        <taxon>Bacteria</taxon>
        <taxon>Pseudomonadati</taxon>
        <taxon>Pseudomonadota</taxon>
        <taxon>Betaproteobacteria</taxon>
        <taxon>Burkholderiales</taxon>
        <taxon>Burkholderiaceae</taxon>
        <taxon>Cupriavidus</taxon>
    </lineage>
</organism>
<evidence type="ECO:0000255" key="1">
    <source>
        <dbReference type="HAMAP-Rule" id="MF_01658"/>
    </source>
</evidence>
<keyword id="KW-1003">Cell membrane</keyword>
<keyword id="KW-0408">Iron</keyword>
<keyword id="KW-0472">Membrane</keyword>
<keyword id="KW-0479">Metal-binding</keyword>
<keyword id="KW-0503">Monooxygenase</keyword>
<keyword id="KW-0560">Oxidoreductase</keyword>
<keyword id="KW-0831">Ubiquinone biosynthesis</keyword>